<name>HIKES_CHICK</name>
<protein>
    <recommendedName>
        <fullName>Protein Hikeshi</fullName>
    </recommendedName>
</protein>
<reference key="1">
    <citation type="journal article" date="2005" name="Genome Biol.">
        <title>Full-length cDNAs from chicken bursal lymphocytes to facilitate gene function analysis.</title>
        <authorList>
            <person name="Caldwell R.B."/>
            <person name="Kierzek A.M."/>
            <person name="Arakawa H."/>
            <person name="Bezzubov Y."/>
            <person name="Zaim J."/>
            <person name="Fiedler P."/>
            <person name="Kutter S."/>
            <person name="Blagodatski A."/>
            <person name="Kostovska D."/>
            <person name="Koter M."/>
            <person name="Plachy J."/>
            <person name="Carninci P."/>
            <person name="Hayashizaki Y."/>
            <person name="Buerstedde J.-M."/>
        </authorList>
    </citation>
    <scope>NUCLEOTIDE SEQUENCE [LARGE SCALE MRNA]</scope>
    <source>
        <strain>CB</strain>
        <tissue>Bursa of Fabricius</tissue>
    </source>
</reference>
<reference key="2">
    <citation type="journal article" date="2004" name="Nature">
        <title>Sequence and comparative analysis of the chicken genome provide unique perspectives on vertebrate evolution.</title>
        <authorList>
            <person name="Hillier L.W."/>
            <person name="Miller W."/>
            <person name="Birney E."/>
            <person name="Warren W."/>
            <person name="Hardison R.C."/>
            <person name="Ponting C.P."/>
            <person name="Bork P."/>
            <person name="Burt D.W."/>
            <person name="Groenen M.A.M."/>
            <person name="Delany M.E."/>
            <person name="Dodgson J.B."/>
            <person name="Chinwalla A.T."/>
            <person name="Cliften P.F."/>
            <person name="Clifton S.W."/>
            <person name="Delehaunty K.D."/>
            <person name="Fronick C."/>
            <person name="Fulton R.S."/>
            <person name="Graves T.A."/>
            <person name="Kremitzki C."/>
            <person name="Layman D."/>
            <person name="Magrini V."/>
            <person name="McPherson J.D."/>
            <person name="Miner T.L."/>
            <person name="Minx P."/>
            <person name="Nash W.E."/>
            <person name="Nhan M.N."/>
            <person name="Nelson J.O."/>
            <person name="Oddy L.G."/>
            <person name="Pohl C.S."/>
            <person name="Randall-Maher J."/>
            <person name="Smith S.M."/>
            <person name="Wallis J.W."/>
            <person name="Yang S.-P."/>
            <person name="Romanov M.N."/>
            <person name="Rondelli C.M."/>
            <person name="Paton B."/>
            <person name="Smith J."/>
            <person name="Morrice D."/>
            <person name="Daniels L."/>
            <person name="Tempest H.G."/>
            <person name="Robertson L."/>
            <person name="Masabanda J.S."/>
            <person name="Griffin D.K."/>
            <person name="Vignal A."/>
            <person name="Fillon V."/>
            <person name="Jacobbson L."/>
            <person name="Kerje S."/>
            <person name="Andersson L."/>
            <person name="Crooijmans R.P."/>
            <person name="Aerts J."/>
            <person name="van der Poel J.J."/>
            <person name="Ellegren H."/>
            <person name="Caldwell R.B."/>
            <person name="Hubbard S.J."/>
            <person name="Grafham D.V."/>
            <person name="Kierzek A.M."/>
            <person name="McLaren S.R."/>
            <person name="Overton I.M."/>
            <person name="Arakawa H."/>
            <person name="Beattie K.J."/>
            <person name="Bezzubov Y."/>
            <person name="Boardman P.E."/>
            <person name="Bonfield J.K."/>
            <person name="Croning M.D.R."/>
            <person name="Davies R.M."/>
            <person name="Francis M.D."/>
            <person name="Humphray S.J."/>
            <person name="Scott C.E."/>
            <person name="Taylor R.G."/>
            <person name="Tickle C."/>
            <person name="Brown W.R.A."/>
            <person name="Rogers J."/>
            <person name="Buerstedde J.-M."/>
            <person name="Wilson S.A."/>
            <person name="Stubbs L."/>
            <person name="Ovcharenko I."/>
            <person name="Gordon L."/>
            <person name="Lucas S."/>
            <person name="Miller M.M."/>
            <person name="Inoko H."/>
            <person name="Shiina T."/>
            <person name="Kaufman J."/>
            <person name="Salomonsen J."/>
            <person name="Skjoedt K."/>
            <person name="Wong G.K.-S."/>
            <person name="Wang J."/>
            <person name="Liu B."/>
            <person name="Wang J."/>
            <person name="Yu J."/>
            <person name="Yang H."/>
            <person name="Nefedov M."/>
            <person name="Koriabine M."/>
            <person name="Dejong P.J."/>
            <person name="Goodstadt L."/>
            <person name="Webber C."/>
            <person name="Dickens N.J."/>
            <person name="Letunic I."/>
            <person name="Suyama M."/>
            <person name="Torrents D."/>
            <person name="von Mering C."/>
            <person name="Zdobnov E.M."/>
            <person name="Makova K."/>
            <person name="Nekrutenko A."/>
            <person name="Elnitski L."/>
            <person name="Eswara P."/>
            <person name="King D.C."/>
            <person name="Yang S.-P."/>
            <person name="Tyekucheva S."/>
            <person name="Radakrishnan A."/>
            <person name="Harris R.S."/>
            <person name="Chiaromonte F."/>
            <person name="Taylor J."/>
            <person name="He J."/>
            <person name="Rijnkels M."/>
            <person name="Griffiths-Jones S."/>
            <person name="Ureta-Vidal A."/>
            <person name="Hoffman M.M."/>
            <person name="Severin J."/>
            <person name="Searle S.M.J."/>
            <person name="Law A.S."/>
            <person name="Speed D."/>
            <person name="Waddington D."/>
            <person name="Cheng Z."/>
            <person name="Tuzun E."/>
            <person name="Eichler E."/>
            <person name="Bao Z."/>
            <person name="Flicek P."/>
            <person name="Shteynberg D.D."/>
            <person name="Brent M.R."/>
            <person name="Bye J.M."/>
            <person name="Huckle E.J."/>
            <person name="Chatterji S."/>
            <person name="Dewey C."/>
            <person name="Pachter L."/>
            <person name="Kouranov A."/>
            <person name="Mourelatos Z."/>
            <person name="Hatzigeorgiou A.G."/>
            <person name="Paterson A.H."/>
            <person name="Ivarie R."/>
            <person name="Brandstrom M."/>
            <person name="Axelsson E."/>
            <person name="Backstrom N."/>
            <person name="Berlin S."/>
            <person name="Webster M.T."/>
            <person name="Pourquie O."/>
            <person name="Reymond A."/>
            <person name="Ucla C."/>
            <person name="Antonarakis S.E."/>
            <person name="Long M."/>
            <person name="Emerson J.J."/>
            <person name="Betran E."/>
            <person name="Dupanloup I."/>
            <person name="Kaessmann H."/>
            <person name="Hinrichs A.S."/>
            <person name="Bejerano G."/>
            <person name="Furey T.S."/>
            <person name="Harte R.A."/>
            <person name="Raney B."/>
            <person name="Siepel A."/>
            <person name="Kent W.J."/>
            <person name="Haussler D."/>
            <person name="Eyras E."/>
            <person name="Castelo R."/>
            <person name="Abril J.F."/>
            <person name="Castellano S."/>
            <person name="Camara F."/>
            <person name="Parra G."/>
            <person name="Guigo R."/>
            <person name="Bourque G."/>
            <person name="Tesler G."/>
            <person name="Pevzner P.A."/>
            <person name="Smit A."/>
            <person name="Fulton L.A."/>
            <person name="Mardis E.R."/>
            <person name="Wilson R.K."/>
        </authorList>
    </citation>
    <scope>NUCLEOTIDE SEQUENCE [LARGE SCALE GENOMIC DNA]</scope>
    <source>
        <strain>Red jungle fowl</strain>
    </source>
</reference>
<gene>
    <name type="primary">HIKESHI</name>
    <name type="ORF">RCJMB04_13p7</name>
</gene>
<accession>Q5ZK09</accession>
<accession>F1NFS9</accession>
<sequence>MFGCLVAGRLVQAAPQQVAEDKFVFDLPDYENINHVVVFMLGTVPFPEGMGGSVYFCYPDQSGMAVWQLLGFVTNEKPSAIFKISGLKSGKGSQHPFGAMNLPQTPTVAQIGISVELLENLVQQTPVANAAVSSVDSFTEFTQKMLDNFYNFASSFAVTQAQMTPNPSEAFIPANVVLKWYENFQRRLTQNPLFWKT</sequence>
<keyword id="KW-0963">Cytoplasm</keyword>
<keyword id="KW-0539">Nucleus</keyword>
<keyword id="KW-0653">Protein transport</keyword>
<keyword id="KW-1185">Reference proteome</keyword>
<keyword id="KW-0813">Transport</keyword>
<evidence type="ECO:0000250" key="1"/>
<evidence type="ECO:0000305" key="2"/>
<organism>
    <name type="scientific">Gallus gallus</name>
    <name type="common">Chicken</name>
    <dbReference type="NCBI Taxonomy" id="9031"/>
    <lineage>
        <taxon>Eukaryota</taxon>
        <taxon>Metazoa</taxon>
        <taxon>Chordata</taxon>
        <taxon>Craniata</taxon>
        <taxon>Vertebrata</taxon>
        <taxon>Euteleostomi</taxon>
        <taxon>Archelosauria</taxon>
        <taxon>Archosauria</taxon>
        <taxon>Dinosauria</taxon>
        <taxon>Saurischia</taxon>
        <taxon>Theropoda</taxon>
        <taxon>Coelurosauria</taxon>
        <taxon>Aves</taxon>
        <taxon>Neognathae</taxon>
        <taxon>Galloanserae</taxon>
        <taxon>Galliformes</taxon>
        <taxon>Phasianidae</taxon>
        <taxon>Phasianinae</taxon>
        <taxon>Gallus</taxon>
    </lineage>
</organism>
<comment type="function">
    <text evidence="1">Acts as a specific nuclear import carrier for HSP70 proteins following heat-shock stress: acts by mediating the nucleoporin-dependent translocation of ATP-bound HSP70 proteins into the nucleus. HSP70 proteins import is required to protect cells from heat shock damages (By similarity).</text>
</comment>
<comment type="subcellular location">
    <subcellularLocation>
        <location evidence="1">Cytoplasm</location>
        <location evidence="1">Cytosol</location>
    </subcellularLocation>
    <subcellularLocation>
        <location evidence="1">Nucleus</location>
    </subcellularLocation>
</comment>
<comment type="similarity">
    <text evidence="2">Belongs to the OPI10 family.</text>
</comment>
<dbReference type="EMBL" id="AJ720275">
    <property type="protein sequence ID" value="CAG31934.1"/>
    <property type="molecule type" value="mRNA"/>
</dbReference>
<dbReference type="EMBL" id="AADN02004574">
    <property type="status" value="NOT_ANNOTATED_CDS"/>
    <property type="molecule type" value="Genomic_DNA"/>
</dbReference>
<dbReference type="RefSeq" id="NP_001026583.2">
    <property type="nucleotide sequence ID" value="NM_001031412.2"/>
</dbReference>
<dbReference type="SMR" id="Q5ZK09"/>
<dbReference type="FunCoup" id="Q5ZK09">
    <property type="interactions" value="1674"/>
</dbReference>
<dbReference type="STRING" id="9031.ENSGALP00000002814"/>
<dbReference type="PaxDb" id="9031-ENSGALP00000002814"/>
<dbReference type="Ensembl" id="ENSGALT00010021679.1">
    <property type="protein sequence ID" value="ENSGALP00010012369.1"/>
    <property type="gene ID" value="ENSGALG00010009101.1"/>
</dbReference>
<dbReference type="GeneID" id="427034"/>
<dbReference type="KEGG" id="gga:427034"/>
<dbReference type="CTD" id="51501"/>
<dbReference type="VEuPathDB" id="HostDB:geneid_427034"/>
<dbReference type="eggNOG" id="KOG4067">
    <property type="taxonomic scope" value="Eukaryota"/>
</dbReference>
<dbReference type="GeneTree" id="ENSGT00390000004056"/>
<dbReference type="HOGENOM" id="CLU_084839_2_0_1"/>
<dbReference type="InParanoid" id="Q5ZK09"/>
<dbReference type="OrthoDB" id="10248398at2759"/>
<dbReference type="PhylomeDB" id="Q5ZK09"/>
<dbReference type="TreeFam" id="TF313222"/>
<dbReference type="PRO" id="PR:Q5ZK09"/>
<dbReference type="Proteomes" id="UP000000539">
    <property type="component" value="Chromosome 1"/>
</dbReference>
<dbReference type="Bgee" id="ENSGALG00000001823">
    <property type="expression patterns" value="Expressed in heart and 13 other cell types or tissues"/>
</dbReference>
<dbReference type="GO" id="GO:0005829">
    <property type="term" value="C:cytosol"/>
    <property type="evidence" value="ECO:0000250"/>
    <property type="project" value="UniProtKB"/>
</dbReference>
<dbReference type="GO" id="GO:0016607">
    <property type="term" value="C:nuclear speck"/>
    <property type="evidence" value="ECO:0007669"/>
    <property type="project" value="Ensembl"/>
</dbReference>
<dbReference type="GO" id="GO:0005634">
    <property type="term" value="C:nucleus"/>
    <property type="evidence" value="ECO:0000250"/>
    <property type="project" value="UniProtKB"/>
</dbReference>
<dbReference type="GO" id="GO:0030544">
    <property type="term" value="F:Hsp70 protein binding"/>
    <property type="evidence" value="ECO:0000250"/>
    <property type="project" value="UniProtKB"/>
</dbReference>
<dbReference type="GO" id="GO:0061608">
    <property type="term" value="F:nuclear import signal receptor activity"/>
    <property type="evidence" value="ECO:0000318"/>
    <property type="project" value="GO_Central"/>
</dbReference>
<dbReference type="GO" id="GO:0034605">
    <property type="term" value="P:cellular response to heat"/>
    <property type="evidence" value="ECO:0000250"/>
    <property type="project" value="UniProtKB"/>
</dbReference>
<dbReference type="GO" id="GO:0006606">
    <property type="term" value="P:protein import into nucleus"/>
    <property type="evidence" value="ECO:0000250"/>
    <property type="project" value="UniProtKB"/>
</dbReference>
<dbReference type="GO" id="GO:0015031">
    <property type="term" value="P:protein transport"/>
    <property type="evidence" value="ECO:0000250"/>
    <property type="project" value="UniProtKB"/>
</dbReference>
<dbReference type="InterPro" id="IPR048364">
    <property type="entry name" value="Hikeshi-like_C"/>
</dbReference>
<dbReference type="InterPro" id="IPR008493">
    <property type="entry name" value="Hikeshi-like_N"/>
</dbReference>
<dbReference type="InterPro" id="IPR031318">
    <property type="entry name" value="OPI10"/>
</dbReference>
<dbReference type="PANTHER" id="PTHR12925">
    <property type="entry name" value="HIKESHI FAMILY MEMBER"/>
    <property type="match status" value="1"/>
</dbReference>
<dbReference type="PANTHER" id="PTHR12925:SF0">
    <property type="entry name" value="PROTEIN HIKESHI"/>
    <property type="match status" value="1"/>
</dbReference>
<dbReference type="Pfam" id="PF21057">
    <property type="entry name" value="Hikeshi-like_C"/>
    <property type="match status" value="1"/>
</dbReference>
<dbReference type="Pfam" id="PF05603">
    <property type="entry name" value="Hikeshi-like_N"/>
    <property type="match status" value="1"/>
</dbReference>
<feature type="chain" id="PRO_0000245265" description="Protein Hikeshi">
    <location>
        <begin position="1"/>
        <end position="197"/>
    </location>
</feature>
<feature type="sequence conflict" description="In Ref. 1; CAG31934." evidence="2" ref="1">
    <original>V</original>
    <variation>I</variation>
    <location>
        <position position="44"/>
    </location>
</feature>
<proteinExistence type="evidence at transcript level"/>